<proteinExistence type="inferred from homology"/>
<keyword id="KW-1032">Host cell membrane</keyword>
<keyword id="KW-1043">Host membrane</keyword>
<keyword id="KW-0945">Host-virus interaction</keyword>
<keyword id="KW-0446">Lipid-binding</keyword>
<keyword id="KW-0472">Membrane</keyword>
<keyword id="KW-0261">Viral envelope protein</keyword>
<keyword id="KW-0468">Viral matrix protein</keyword>
<keyword id="KW-0946">Virion</keyword>
<accession>P13844</accession>
<dbReference type="EMBL" id="D00338">
    <property type="protein sequence ID" value="BAA00242.1"/>
    <property type="molecule type" value="Genomic_RNA"/>
</dbReference>
<dbReference type="PIR" id="A31039">
    <property type="entry name" value="MFNZMH"/>
</dbReference>
<dbReference type="SMR" id="P13844"/>
<dbReference type="GO" id="GO:0020002">
    <property type="term" value="C:host cell plasma membrane"/>
    <property type="evidence" value="ECO:0007669"/>
    <property type="project" value="UniProtKB-SubCell"/>
</dbReference>
<dbReference type="GO" id="GO:0016020">
    <property type="term" value="C:membrane"/>
    <property type="evidence" value="ECO:0007669"/>
    <property type="project" value="UniProtKB-KW"/>
</dbReference>
<dbReference type="GO" id="GO:0019031">
    <property type="term" value="C:viral envelope"/>
    <property type="evidence" value="ECO:0007669"/>
    <property type="project" value="UniProtKB-KW"/>
</dbReference>
<dbReference type="GO" id="GO:0008289">
    <property type="term" value="F:lipid binding"/>
    <property type="evidence" value="ECO:0007669"/>
    <property type="project" value="UniProtKB-KW"/>
</dbReference>
<dbReference type="GO" id="GO:0039660">
    <property type="term" value="F:structural constituent of virion"/>
    <property type="evidence" value="ECO:0007669"/>
    <property type="project" value="UniProtKB-KW"/>
</dbReference>
<dbReference type="GO" id="GO:0019068">
    <property type="term" value="P:virion assembly"/>
    <property type="evidence" value="ECO:0007669"/>
    <property type="project" value="InterPro"/>
</dbReference>
<dbReference type="FunFam" id="2.70.20.50:FF:000001">
    <property type="entry name" value="Matrix protein"/>
    <property type="match status" value="1"/>
</dbReference>
<dbReference type="FunFam" id="2.70.20.60:FF:000001">
    <property type="entry name" value="Matrix protein"/>
    <property type="match status" value="1"/>
</dbReference>
<dbReference type="Gene3D" id="2.70.20.60">
    <property type="entry name" value="Viral matrix protein, C-terminal domain"/>
    <property type="match status" value="1"/>
</dbReference>
<dbReference type="Gene3D" id="2.70.20.50">
    <property type="entry name" value="Viral matrix protein, N-terminal domain"/>
    <property type="match status" value="1"/>
</dbReference>
<dbReference type="InterPro" id="IPR042539">
    <property type="entry name" value="Matrix_C"/>
</dbReference>
<dbReference type="InterPro" id="IPR042540">
    <property type="entry name" value="Matrix_N"/>
</dbReference>
<dbReference type="InterPro" id="IPR055413">
    <property type="entry name" value="Matrix_Paramyxo_C"/>
</dbReference>
<dbReference type="InterPro" id="IPR000982">
    <property type="entry name" value="Matrix_Paramyxo_N"/>
</dbReference>
<dbReference type="Pfam" id="PF23765">
    <property type="entry name" value="Matrix_Paramyxo_C"/>
    <property type="match status" value="1"/>
</dbReference>
<dbReference type="Pfam" id="PF00661">
    <property type="entry name" value="Matrix_Paramyxo_N"/>
    <property type="match status" value="1"/>
</dbReference>
<sequence length="335" mass="37674">MTEIYDFDKSAWDIKGSIAPIQPTTYSDGRLVPQVRVIDPGLGDRKDECFMYMFLLGVVEDSDSLGPPIGRAFGSLPLGVGRSTAKPEELLKEATELDIVVRRTAGLNEKLVFYNNTPLTLLTPWRKVLTTGSVFNANQVCNAVNLIPLDTPQRFRVVYMSITRLSDNGYYTVPRRMLEFRSVNAVAFNLLVTLRIDKAIGPGKIIDNTEQLPEATFMVHIGNFRRKKSEVYSADYCKMKIEKMGLVFALGGIGGTSLHIRSTGKMSKTLHAQLGFKKTLCYPLMGINEDLNRLLWRSRCKIVRIQAVLQPSVPQEFRIYDDVIINDDQGLFKVL</sequence>
<organism>
    <name type="scientific">Measles virus (strain Hu2)</name>
    <name type="common">MeV</name>
    <name type="synonym">Subacute sclerose panencephalitis virus</name>
    <dbReference type="NCBI Taxonomy" id="11238"/>
    <lineage>
        <taxon>Viruses</taxon>
        <taxon>Riboviria</taxon>
        <taxon>Orthornavirae</taxon>
        <taxon>Negarnaviricota</taxon>
        <taxon>Haploviricotina</taxon>
        <taxon>Monjiviricetes</taxon>
        <taxon>Mononegavirales</taxon>
        <taxon>Paramyxoviridae</taxon>
        <taxon>Orthoparamyxovirinae</taxon>
        <taxon>Morbillivirus</taxon>
        <taxon>Morbillivirus hominis</taxon>
        <taxon>Measles morbillivirus</taxon>
    </lineage>
</organism>
<comment type="function">
    <text evidence="1">The M protein has a crucial role in virus assembly and interacts with the RNP complex as well as with the viral membrane. Associates with phosphatidylserine (PS) and phosphatidylinositol 4,5-bisphosphate (PIP2) at the plasma membrane. Interaction with PIP2 triggers matrix protein lattice polymerization. Matrix proteins induce host membrane deformation and curvature necessary for virion assembly/budding.</text>
</comment>
<comment type="subunit">
    <text evidence="1">Homodimer. Dimerization is critical for virion formation. Interacts with host ANP32B.</text>
</comment>
<comment type="subcellular location">
    <subcellularLocation>
        <location evidence="1">Virion</location>
    </subcellularLocation>
    <subcellularLocation>
        <location evidence="1">Host cell membrane</location>
    </subcellularLocation>
</comment>
<comment type="similarity">
    <text evidence="2">Belongs to the morbillivirus/respirovirus/rubulavirus M protein family.</text>
</comment>
<gene>
    <name type="primary">M</name>
</gene>
<reference key="1">
    <citation type="journal article" date="1988" name="J. Gen. Virol.">
        <title>Nucleotide sequence of the gene encoding the matrix protein of a recent measles virus isolate.</title>
        <authorList>
            <person name="Curran M.D."/>
            <person name="Rima B.K."/>
        </authorList>
    </citation>
    <scope>NUCLEOTIDE SEQUENCE [GENOMIC RNA]</scope>
</reference>
<organismHost>
    <name type="scientific">Homo sapiens</name>
    <name type="common">Human</name>
    <dbReference type="NCBI Taxonomy" id="9606"/>
</organismHost>
<name>MATRX_MEASU</name>
<protein>
    <recommendedName>
        <fullName>Matrix protein</fullName>
    </recommendedName>
</protein>
<feature type="chain" id="PRO_0000142755" description="Matrix protein">
    <location>
        <begin position="1"/>
        <end position="335"/>
    </location>
</feature>
<evidence type="ECO:0000250" key="1">
    <source>
        <dbReference type="UniProtKB" id="Q9W850"/>
    </source>
</evidence>
<evidence type="ECO:0000305" key="2"/>